<accession>A8AFQ7</accession>
<reference key="1">
    <citation type="submission" date="2007-08" db="EMBL/GenBank/DDBJ databases">
        <authorList>
            <consortium name="The Citrobacter koseri Genome Sequencing Project"/>
            <person name="McClelland M."/>
            <person name="Sanderson E.K."/>
            <person name="Porwollik S."/>
            <person name="Spieth J."/>
            <person name="Clifton W.S."/>
            <person name="Latreille P."/>
            <person name="Courtney L."/>
            <person name="Wang C."/>
            <person name="Pepin K."/>
            <person name="Bhonagiri V."/>
            <person name="Nash W."/>
            <person name="Johnson M."/>
            <person name="Thiruvilangam P."/>
            <person name="Wilson R."/>
        </authorList>
    </citation>
    <scope>NUCLEOTIDE SEQUENCE [LARGE SCALE GENOMIC DNA]</scope>
    <source>
        <strain>ATCC BAA-895 / CDC 4225-83 / SGSC4696</strain>
    </source>
</reference>
<comment type="function">
    <text evidence="1">Prevents the cell division inhibition by proteins MinC and MinD at internal division sites while permitting inhibition at polar sites. This ensures cell division at the proper site by restricting the formation of a division septum at the midpoint of the long axis of the cell.</text>
</comment>
<comment type="similarity">
    <text evidence="1">Belongs to the MinE family.</text>
</comment>
<organism>
    <name type="scientific">Citrobacter koseri (strain ATCC BAA-895 / CDC 4225-83 / SGSC4696)</name>
    <dbReference type="NCBI Taxonomy" id="290338"/>
    <lineage>
        <taxon>Bacteria</taxon>
        <taxon>Pseudomonadati</taxon>
        <taxon>Pseudomonadota</taxon>
        <taxon>Gammaproteobacteria</taxon>
        <taxon>Enterobacterales</taxon>
        <taxon>Enterobacteriaceae</taxon>
        <taxon>Citrobacter</taxon>
    </lineage>
</organism>
<proteinExistence type="inferred from homology"/>
<feature type="chain" id="PRO_1000047779" description="Cell division topological specificity factor">
    <location>
        <begin position="1"/>
        <end position="88"/>
    </location>
</feature>
<name>MINE_CITK8</name>
<dbReference type="EMBL" id="CP000822">
    <property type="protein sequence ID" value="ABV12320.1"/>
    <property type="molecule type" value="Genomic_DNA"/>
</dbReference>
<dbReference type="RefSeq" id="WP_003859937.1">
    <property type="nucleotide sequence ID" value="NC_009792.1"/>
</dbReference>
<dbReference type="BMRB" id="A8AFQ7"/>
<dbReference type="SMR" id="A8AFQ7"/>
<dbReference type="STRING" id="290338.CKO_01180"/>
<dbReference type="GeneID" id="93246098"/>
<dbReference type="KEGG" id="cko:CKO_01180"/>
<dbReference type="HOGENOM" id="CLU_137929_2_2_6"/>
<dbReference type="OrthoDB" id="9802655at2"/>
<dbReference type="Proteomes" id="UP000008148">
    <property type="component" value="Chromosome"/>
</dbReference>
<dbReference type="GO" id="GO:0051301">
    <property type="term" value="P:cell division"/>
    <property type="evidence" value="ECO:0007669"/>
    <property type="project" value="UniProtKB-KW"/>
</dbReference>
<dbReference type="GO" id="GO:0032955">
    <property type="term" value="P:regulation of division septum assembly"/>
    <property type="evidence" value="ECO:0007669"/>
    <property type="project" value="InterPro"/>
</dbReference>
<dbReference type="FunFam" id="3.30.1070.10:FF:000001">
    <property type="entry name" value="Cell division topological specificity factor"/>
    <property type="match status" value="1"/>
</dbReference>
<dbReference type="Gene3D" id="3.30.1070.10">
    <property type="entry name" value="Cell division topological specificity factor MinE"/>
    <property type="match status" value="1"/>
</dbReference>
<dbReference type="HAMAP" id="MF_00262">
    <property type="entry name" value="MinE"/>
    <property type="match status" value="1"/>
</dbReference>
<dbReference type="InterPro" id="IPR005527">
    <property type="entry name" value="MinE"/>
</dbReference>
<dbReference type="InterPro" id="IPR036707">
    <property type="entry name" value="MinE_sf"/>
</dbReference>
<dbReference type="NCBIfam" id="TIGR01215">
    <property type="entry name" value="minE"/>
    <property type="match status" value="1"/>
</dbReference>
<dbReference type="NCBIfam" id="NF001422">
    <property type="entry name" value="PRK00296.1"/>
    <property type="match status" value="1"/>
</dbReference>
<dbReference type="Pfam" id="PF03776">
    <property type="entry name" value="MinE"/>
    <property type="match status" value="1"/>
</dbReference>
<dbReference type="SUPFAM" id="SSF55229">
    <property type="entry name" value="Cell division protein MinE topological specificity domain"/>
    <property type="match status" value="1"/>
</dbReference>
<gene>
    <name evidence="1" type="primary">minE</name>
    <name type="ordered locus">CKO_01180</name>
</gene>
<protein>
    <recommendedName>
        <fullName evidence="1">Cell division topological specificity factor</fullName>
    </recommendedName>
</protein>
<sequence>MALLDFFLSRKKSTANIAKERLQIIVAERRRSDAEPHYLPQLRKDILEVICKYVQIDPEMVTVQLEQKDGDISILELNVTLPEAEESR</sequence>
<evidence type="ECO:0000255" key="1">
    <source>
        <dbReference type="HAMAP-Rule" id="MF_00262"/>
    </source>
</evidence>
<keyword id="KW-0131">Cell cycle</keyword>
<keyword id="KW-0132">Cell division</keyword>
<keyword id="KW-1185">Reference proteome</keyword>